<dbReference type="EMBL" id="BC118773">
    <property type="protein sequence ID" value="AAI18774.1"/>
    <property type="molecule type" value="mRNA"/>
</dbReference>
<dbReference type="RefSeq" id="NP_001072208.1">
    <property type="nucleotide sequence ID" value="NM_001078740.1"/>
</dbReference>
<dbReference type="RefSeq" id="XP_012825984.1">
    <property type="nucleotide sequence ID" value="XM_012970530.3"/>
</dbReference>
<dbReference type="SMR" id="Q0VFM6"/>
<dbReference type="FunCoup" id="Q0VFM6">
    <property type="interactions" value="513"/>
</dbReference>
<dbReference type="STRING" id="8364.ENSXETP00000052072"/>
<dbReference type="PaxDb" id="8364-ENSXETP00000041698"/>
<dbReference type="DNASU" id="779654"/>
<dbReference type="GeneID" id="779654"/>
<dbReference type="KEGG" id="xtr:779654"/>
<dbReference type="AGR" id="Xenbase:XB-GENE-984239"/>
<dbReference type="CTD" id="29926"/>
<dbReference type="eggNOG" id="KOG1460">
    <property type="taxonomic scope" value="Eukaryota"/>
</dbReference>
<dbReference type="HOGENOM" id="CLU_029499_3_0_1"/>
<dbReference type="InParanoid" id="Q0VFM6"/>
<dbReference type="OrthoDB" id="285674at2759"/>
<dbReference type="Proteomes" id="UP000008143">
    <property type="component" value="Chromosome 9"/>
</dbReference>
<dbReference type="Bgee" id="ENSXETG00000019242">
    <property type="expression patterns" value="Expressed in neurula embryo and 13 other cell types or tissues"/>
</dbReference>
<dbReference type="GO" id="GO:0005737">
    <property type="term" value="C:cytoplasm"/>
    <property type="evidence" value="ECO:0007669"/>
    <property type="project" value="UniProtKB-SubCell"/>
</dbReference>
<dbReference type="GO" id="GO:0016740">
    <property type="term" value="F:transferase activity"/>
    <property type="evidence" value="ECO:0007669"/>
    <property type="project" value="InterPro"/>
</dbReference>
<dbReference type="GO" id="GO:0009058">
    <property type="term" value="P:biosynthetic process"/>
    <property type="evidence" value="ECO:0007669"/>
    <property type="project" value="InterPro"/>
</dbReference>
<dbReference type="CDD" id="cd06428">
    <property type="entry name" value="M1P_guanylylT_A_like_N"/>
    <property type="match status" value="1"/>
</dbReference>
<dbReference type="FunFam" id="3.90.550.10:FF:000071">
    <property type="entry name" value="Mannose-1-phosphate guanyltransferase alpha"/>
    <property type="match status" value="1"/>
</dbReference>
<dbReference type="Gene3D" id="2.160.10.10">
    <property type="entry name" value="Hexapeptide repeat proteins"/>
    <property type="match status" value="1"/>
</dbReference>
<dbReference type="Gene3D" id="3.90.550.10">
    <property type="entry name" value="Spore Coat Polysaccharide Biosynthesis Protein SpsA, Chain A"/>
    <property type="match status" value="1"/>
</dbReference>
<dbReference type="InterPro" id="IPR056729">
    <property type="entry name" value="GMPPB_C"/>
</dbReference>
<dbReference type="InterPro" id="IPR018357">
    <property type="entry name" value="Hexapep_transf_CS"/>
</dbReference>
<dbReference type="InterPro" id="IPR050486">
    <property type="entry name" value="Mannose-1P_guanyltransferase"/>
</dbReference>
<dbReference type="InterPro" id="IPR005835">
    <property type="entry name" value="NTP_transferase_dom"/>
</dbReference>
<dbReference type="InterPro" id="IPR029044">
    <property type="entry name" value="Nucleotide-diphossugar_trans"/>
</dbReference>
<dbReference type="PANTHER" id="PTHR22572">
    <property type="entry name" value="SUGAR-1-PHOSPHATE GUANYL TRANSFERASE"/>
    <property type="match status" value="1"/>
</dbReference>
<dbReference type="Pfam" id="PF25087">
    <property type="entry name" value="GMPPB_C"/>
    <property type="match status" value="1"/>
</dbReference>
<dbReference type="Pfam" id="PF00483">
    <property type="entry name" value="NTP_transferase"/>
    <property type="match status" value="1"/>
</dbReference>
<dbReference type="SUPFAM" id="SSF53448">
    <property type="entry name" value="Nucleotide-diphospho-sugar transferases"/>
    <property type="match status" value="1"/>
</dbReference>
<dbReference type="PROSITE" id="PS00101">
    <property type="entry name" value="HEXAPEP_TRANSFERASES"/>
    <property type="match status" value="1"/>
</dbReference>
<sequence>MLKAVILIGGPQKGTRFRPLSFEVPKPLFPVAGVPMVQHHIEACSKVPNLKEILLIGFYQPNEALSSFLLKAQQEFKVAIRYLQEYSALGTGGGIYHFRDQILSGGPQAFFVMNADVCSAFPLVPMLDFHKQHGGSQSYVILGTTANRSQSLNYGCIVANGETQEVLHYVEKPGTFVSDIINCGIYLFSPSIFQHIAEVFQRNQQELQLEENSSWQRTEVIRLEQDVFTTLAGRGKLYVYKTEGCWSQIKSAGSAIYASRLYLSQYGSTHPERLASTKEGGPTIRGNVYIHPTANVDPSAVLGPNVSIGMGVTVGAGVRIRESIVLHGAVLQDHSCVLNTIVGWDSTVGRWARVEGTPSDPNPNDPYSKIDSETLFREGKLTPSITILGCNVSIPAEVVILNSIVLPHKELSRSFKNQIIL</sequence>
<keyword id="KW-0963">Cytoplasm</keyword>
<keyword id="KW-1185">Reference proteome</keyword>
<protein>
    <recommendedName>
        <fullName evidence="3">Mannose-1-phosphate guanylyltransferase regulatory subunit alpha</fullName>
    </recommendedName>
    <alternativeName>
        <fullName>GDP-mannose pyrophosphorylase A</fullName>
    </alternativeName>
    <alternativeName>
        <fullName>GTP-mannose-1-phosphate guanylyltransferase alpha</fullName>
    </alternativeName>
</protein>
<accession>Q0VFM6</accession>
<organism>
    <name type="scientific">Xenopus tropicalis</name>
    <name type="common">Western clawed frog</name>
    <name type="synonym">Silurana tropicalis</name>
    <dbReference type="NCBI Taxonomy" id="8364"/>
    <lineage>
        <taxon>Eukaryota</taxon>
        <taxon>Metazoa</taxon>
        <taxon>Chordata</taxon>
        <taxon>Craniata</taxon>
        <taxon>Vertebrata</taxon>
        <taxon>Euteleostomi</taxon>
        <taxon>Amphibia</taxon>
        <taxon>Batrachia</taxon>
        <taxon>Anura</taxon>
        <taxon>Pipoidea</taxon>
        <taxon>Pipidae</taxon>
        <taxon>Xenopodinae</taxon>
        <taxon>Xenopus</taxon>
        <taxon>Silurana</taxon>
    </lineage>
</organism>
<reference key="1">
    <citation type="submission" date="2006-07" db="EMBL/GenBank/DDBJ databases">
        <authorList>
            <consortium name="NIH - Xenopus Gene Collection (XGC) project"/>
        </authorList>
    </citation>
    <scope>NUCLEOTIDE SEQUENCE [LARGE SCALE MRNA]</scope>
    <source>
        <tissue>Testis</tissue>
    </source>
</reference>
<feature type="chain" id="PRO_0000327880" description="Mannose-1-phosphate guanylyltransferase regulatory subunit alpha">
    <location>
        <begin position="1"/>
        <end position="421"/>
    </location>
</feature>
<feature type="region of interest" description="Substrate-binding domain" evidence="2">
    <location>
        <begin position="2"/>
        <end position="252"/>
    </location>
</feature>
<feature type="region of interest" description="Hexapeptide repeat domain" evidence="2">
    <location>
        <begin position="274"/>
        <end position="421"/>
    </location>
</feature>
<feature type="region of interest" description="C-loop" evidence="2">
    <location>
        <begin position="357"/>
        <end position="385"/>
    </location>
</feature>
<feature type="binding site" evidence="2">
    <location>
        <position position="85"/>
    </location>
    <ligand>
        <name>GDP-alpha-D-mannose</name>
        <dbReference type="ChEBI" id="CHEBI:57527"/>
    </ligand>
</feature>
<feature type="binding site" evidence="2">
    <location>
        <position position="248"/>
    </location>
    <ligand>
        <name>GDP-alpha-D-mannose</name>
        <dbReference type="ChEBI" id="CHEBI:57527"/>
    </ligand>
</feature>
<evidence type="ECO:0000250" key="1"/>
<evidence type="ECO:0000250" key="2">
    <source>
        <dbReference type="UniProtKB" id="Q96IJ6"/>
    </source>
</evidence>
<evidence type="ECO:0000305" key="3"/>
<comment type="function">
    <text evidence="2">Regulatory subunit of the GMPPA-GMPPB mannose-1-phosphate guanylyltransferase complex; reduces the catalytic activity of GMPPB when part of the complex. Mediates allosteric feedback inhibition of GMPPB catalytic activity upon binding GDP-alpha-D-mannose. Together with GMPPB regulates GDP-alpha-D-mannose levels.</text>
</comment>
<comment type="subunit">
    <text evidence="2">Component of the GMPPA-GMPPB mannose-1-phosphate guanylyltransferase complex composed of 4 gmppa subunits and 8 gmppb subunits; the complex is organized into three layers, a central layer made up of 2 gmppa dimers sandwiched between two layers each made up of 2 gmppb dimers.</text>
</comment>
<comment type="subcellular location">
    <subcellularLocation>
        <location evidence="1">Cytoplasm</location>
    </subcellularLocation>
</comment>
<comment type="domain">
    <text evidence="2">The N-terminal substrate-binding domain adopts a Rossman-like fold and has a binding pocket for GTP or GDP-alpha-D-mannose.</text>
</comment>
<comment type="domain">
    <text evidence="2">The C-terminal domain consists of a series of tandem hexapeptide repeats that adopt a beta-helix conformation. The beta-helix forms several protein interaction surfaces involved in assembly of the GMPPA-GMPPB mannose-1-phosphate guanylyltransferase complex. A loop extending from the C-terminal domain (C-loop) is involved in interaction with other subunits of the GMPPA-GMPPB complex and may be involved in allosteric inhibition of gmppb catalytic activity by gmppa.</text>
</comment>
<comment type="similarity">
    <text evidence="3">Belongs to the transferase hexapeptide repeat family.</text>
</comment>
<proteinExistence type="evidence at transcript level"/>
<name>GMPPA_XENTR</name>
<gene>
    <name type="primary">gmppa</name>
</gene>